<evidence type="ECO:0000250" key="1">
    <source>
        <dbReference type="UniProtKB" id="P16140"/>
    </source>
</evidence>
<evidence type="ECO:0000250" key="2">
    <source>
        <dbReference type="UniProtKB" id="P21281"/>
    </source>
</evidence>
<evidence type="ECO:0000269" key="3">
    <source>
    </source>
</evidence>
<evidence type="ECO:0000269" key="4">
    <source>
    </source>
</evidence>
<evidence type="ECO:0000303" key="5">
    <source>
    </source>
</evidence>
<evidence type="ECO:0000305" key="6"/>
<evidence type="ECO:0000312" key="7">
    <source>
        <dbReference type="PomBase" id="SPAC637.05c"/>
    </source>
</evidence>
<reference key="1">
    <citation type="journal article" date="1992" name="Yeast">
        <title>Sequence of the genes encoding subunits A and B of the vacuolar H(+)-ATPase of Schizosaccharomyces pombe.</title>
        <authorList>
            <person name="Ghislain M."/>
            <person name="Bowman E.J."/>
        </authorList>
    </citation>
    <scope>NUCLEOTIDE SEQUENCE [GENOMIC DNA]</scope>
    <source>
        <strain>972 / ATCC 24843</strain>
    </source>
</reference>
<reference key="2">
    <citation type="journal article" date="2002" name="Nature">
        <title>The genome sequence of Schizosaccharomyces pombe.</title>
        <authorList>
            <person name="Wood V."/>
            <person name="Gwilliam R."/>
            <person name="Rajandream M.A."/>
            <person name="Lyne M.H."/>
            <person name="Lyne R."/>
            <person name="Stewart A."/>
            <person name="Sgouros J.G."/>
            <person name="Peat N."/>
            <person name="Hayles J."/>
            <person name="Baker S.G."/>
            <person name="Basham D."/>
            <person name="Bowman S."/>
            <person name="Brooks K."/>
            <person name="Brown D."/>
            <person name="Brown S."/>
            <person name="Chillingworth T."/>
            <person name="Churcher C.M."/>
            <person name="Collins M."/>
            <person name="Connor R."/>
            <person name="Cronin A."/>
            <person name="Davis P."/>
            <person name="Feltwell T."/>
            <person name="Fraser A."/>
            <person name="Gentles S."/>
            <person name="Goble A."/>
            <person name="Hamlin N."/>
            <person name="Harris D.E."/>
            <person name="Hidalgo J."/>
            <person name="Hodgson G."/>
            <person name="Holroyd S."/>
            <person name="Hornsby T."/>
            <person name="Howarth S."/>
            <person name="Huckle E.J."/>
            <person name="Hunt S."/>
            <person name="Jagels K."/>
            <person name="James K.D."/>
            <person name="Jones L."/>
            <person name="Jones M."/>
            <person name="Leather S."/>
            <person name="McDonald S."/>
            <person name="McLean J."/>
            <person name="Mooney P."/>
            <person name="Moule S."/>
            <person name="Mungall K.L."/>
            <person name="Murphy L.D."/>
            <person name="Niblett D."/>
            <person name="Odell C."/>
            <person name="Oliver K."/>
            <person name="O'Neil S."/>
            <person name="Pearson D."/>
            <person name="Quail M.A."/>
            <person name="Rabbinowitsch E."/>
            <person name="Rutherford K.M."/>
            <person name="Rutter S."/>
            <person name="Saunders D."/>
            <person name="Seeger K."/>
            <person name="Sharp S."/>
            <person name="Skelton J."/>
            <person name="Simmonds M.N."/>
            <person name="Squares R."/>
            <person name="Squares S."/>
            <person name="Stevens K."/>
            <person name="Taylor K."/>
            <person name="Taylor R.G."/>
            <person name="Tivey A."/>
            <person name="Walsh S.V."/>
            <person name="Warren T."/>
            <person name="Whitehead S."/>
            <person name="Woodward J.R."/>
            <person name="Volckaert G."/>
            <person name="Aert R."/>
            <person name="Robben J."/>
            <person name="Grymonprez B."/>
            <person name="Weltjens I."/>
            <person name="Vanstreels E."/>
            <person name="Rieger M."/>
            <person name="Schaefer M."/>
            <person name="Mueller-Auer S."/>
            <person name="Gabel C."/>
            <person name="Fuchs M."/>
            <person name="Duesterhoeft A."/>
            <person name="Fritzc C."/>
            <person name="Holzer E."/>
            <person name="Moestl D."/>
            <person name="Hilbert H."/>
            <person name="Borzym K."/>
            <person name="Langer I."/>
            <person name="Beck A."/>
            <person name="Lehrach H."/>
            <person name="Reinhardt R."/>
            <person name="Pohl T.M."/>
            <person name="Eger P."/>
            <person name="Zimmermann W."/>
            <person name="Wedler H."/>
            <person name="Wambutt R."/>
            <person name="Purnelle B."/>
            <person name="Goffeau A."/>
            <person name="Cadieu E."/>
            <person name="Dreano S."/>
            <person name="Gloux S."/>
            <person name="Lelaure V."/>
            <person name="Mottier S."/>
            <person name="Galibert F."/>
            <person name="Aves S.J."/>
            <person name="Xiang Z."/>
            <person name="Hunt C."/>
            <person name="Moore K."/>
            <person name="Hurst S.M."/>
            <person name="Lucas M."/>
            <person name="Rochet M."/>
            <person name="Gaillardin C."/>
            <person name="Tallada V.A."/>
            <person name="Garzon A."/>
            <person name="Thode G."/>
            <person name="Daga R.R."/>
            <person name="Cruzado L."/>
            <person name="Jimenez J."/>
            <person name="Sanchez M."/>
            <person name="del Rey F."/>
            <person name="Benito J."/>
            <person name="Dominguez A."/>
            <person name="Revuelta J.L."/>
            <person name="Moreno S."/>
            <person name="Armstrong J."/>
            <person name="Forsburg S.L."/>
            <person name="Cerutti L."/>
            <person name="Lowe T."/>
            <person name="McCombie W.R."/>
            <person name="Paulsen I."/>
            <person name="Potashkin J."/>
            <person name="Shpakovski G.V."/>
            <person name="Ussery D."/>
            <person name="Barrell B.G."/>
            <person name="Nurse P."/>
        </authorList>
    </citation>
    <scope>NUCLEOTIDE SEQUENCE [LARGE SCALE GENOMIC DNA]</scope>
    <source>
        <strain>972 / ATCC 24843</strain>
    </source>
</reference>
<reference key="3">
    <citation type="journal article" date="2008" name="Eukaryot. Cell">
        <title>Loss of regulators of vacuolar ATPase function and ceramide synthesis results in multidrug sensitivity in Schizosaccharomyces pombe.</title>
        <authorList>
            <person name="Dawson K."/>
            <person name="Toone W.M."/>
            <person name="Jones N."/>
            <person name="Wilkinson C.R."/>
        </authorList>
    </citation>
    <scope>INTERACTION WITH RAV1</scope>
</reference>
<reference key="4">
    <citation type="journal article" date="2008" name="J. Proteome Res.">
        <title>Phosphoproteome analysis of fission yeast.</title>
        <authorList>
            <person name="Wilson-Grady J.T."/>
            <person name="Villen J."/>
            <person name="Gygi S.P."/>
        </authorList>
    </citation>
    <scope>PHOSPHORYLATION [LARGE SCALE ANALYSIS] AT SER-491; SER-492; SER-502 AND SER-503</scope>
    <scope>IDENTIFICATION BY MASS SPECTROMETRY</scope>
</reference>
<sequence length="503" mass="55841">MASLFDINAAAAVKDYSIKPRLSYNTVNSITGPLVILDNIRRPQYNEIVNLNLPDGSVRSGQVLEVAGHKAIVQVFEGTSGVDVRKTTIDFTGHSMRIPVSEDMLGRVFNGSGLPIDKGPNLLAEDYLDINGSPINPYARIYPEEMIQTGISSIDGLNSIARGQKIPIFSAAGLPHNEIAAQICRQAGLVKRPTKDVHDGHEDNFSIVFAAMGVNLETARFFQRDFEENGSFERVTLFLNLANDPTIERIITPRLALSASEFLAYQTEKHVLTILTDMTSYADALREVSAAREEVPGRRGYPGYMYTDLSTIYERAGRVEGRNGSITQIPILTMPNDDITHPIPDLTGYITEGQIFVDRQLHNNAIYPPINVLPSLSRLMKSAIGEGMTRNDHGDVSNQLYAMYAIGRDAASMKSVVGEEALSQEDRLALEFLGKFEKTFISQGAYENRTIFETLDLAWSLLRIFPREMLTRIPKKILDQYYSRSSAYTESSKDVIDNTPESS</sequence>
<dbReference type="EMBL" id="X69638">
    <property type="protein sequence ID" value="CAA49339.1"/>
    <property type="molecule type" value="Genomic_DNA"/>
</dbReference>
<dbReference type="EMBL" id="CU329670">
    <property type="protein sequence ID" value="CAA22584.1"/>
    <property type="molecule type" value="Genomic_DNA"/>
</dbReference>
<dbReference type="PIR" id="S25335">
    <property type="entry name" value="S25335"/>
</dbReference>
<dbReference type="PIR" id="T38997">
    <property type="entry name" value="T38997"/>
</dbReference>
<dbReference type="RefSeq" id="NP_594623.1">
    <property type="nucleotide sequence ID" value="NM_001020051.2"/>
</dbReference>
<dbReference type="SMR" id="P31411"/>
<dbReference type="BioGRID" id="279830">
    <property type="interactions" value="8"/>
</dbReference>
<dbReference type="FunCoup" id="P31411">
    <property type="interactions" value="170"/>
</dbReference>
<dbReference type="STRING" id="284812.P31411"/>
<dbReference type="iPTMnet" id="P31411"/>
<dbReference type="PaxDb" id="4896-SPAC637.05c.1"/>
<dbReference type="EnsemblFungi" id="SPAC637.05c.1">
    <property type="protein sequence ID" value="SPAC637.05c.1:pep"/>
    <property type="gene ID" value="SPAC637.05c"/>
</dbReference>
<dbReference type="GeneID" id="2543408"/>
<dbReference type="KEGG" id="spo:2543408"/>
<dbReference type="PomBase" id="SPAC637.05c">
    <property type="gene designation" value="vma2"/>
</dbReference>
<dbReference type="VEuPathDB" id="FungiDB:SPAC637.05c"/>
<dbReference type="eggNOG" id="KOG1351">
    <property type="taxonomic scope" value="Eukaryota"/>
</dbReference>
<dbReference type="HOGENOM" id="CLU_022916_3_0_1"/>
<dbReference type="InParanoid" id="P31411"/>
<dbReference type="OMA" id="EGFKIKP"/>
<dbReference type="PhylomeDB" id="P31411"/>
<dbReference type="Reactome" id="R-SPO-1222556">
    <property type="pathway name" value="ROS and RNS production in phagocytes"/>
</dbReference>
<dbReference type="Reactome" id="R-SPO-77387">
    <property type="pathway name" value="Insulin receptor recycling"/>
</dbReference>
<dbReference type="Reactome" id="R-SPO-917977">
    <property type="pathway name" value="Transferrin endocytosis and recycling"/>
</dbReference>
<dbReference type="Reactome" id="R-SPO-9639288">
    <property type="pathway name" value="Amino acids regulate mTORC1"/>
</dbReference>
<dbReference type="PRO" id="PR:P31411"/>
<dbReference type="Proteomes" id="UP000002485">
    <property type="component" value="Chromosome I"/>
</dbReference>
<dbReference type="GO" id="GO:0005737">
    <property type="term" value="C:cytoplasm"/>
    <property type="evidence" value="ECO:0007005"/>
    <property type="project" value="PomBase"/>
</dbReference>
<dbReference type="GO" id="GO:0000221">
    <property type="term" value="C:vacuolar proton-transporting V-type ATPase, V1 domain"/>
    <property type="evidence" value="ECO:0000266"/>
    <property type="project" value="PomBase"/>
</dbReference>
<dbReference type="GO" id="GO:0005524">
    <property type="term" value="F:ATP binding"/>
    <property type="evidence" value="ECO:0007669"/>
    <property type="project" value="UniProtKB-KW"/>
</dbReference>
<dbReference type="GO" id="GO:0016887">
    <property type="term" value="F:ATP hydrolysis activity"/>
    <property type="evidence" value="ECO:0000305"/>
    <property type="project" value="PomBase"/>
</dbReference>
<dbReference type="GO" id="GO:0046961">
    <property type="term" value="F:proton-transporting ATPase activity, rotational mechanism"/>
    <property type="evidence" value="ECO:0000318"/>
    <property type="project" value="GO_Central"/>
</dbReference>
<dbReference type="GO" id="GO:0046034">
    <property type="term" value="P:ATP metabolic process"/>
    <property type="evidence" value="ECO:0007669"/>
    <property type="project" value="InterPro"/>
</dbReference>
<dbReference type="GO" id="GO:0007035">
    <property type="term" value="P:vacuolar acidification"/>
    <property type="evidence" value="ECO:0000318"/>
    <property type="project" value="GO_Central"/>
</dbReference>
<dbReference type="CDD" id="cd18112">
    <property type="entry name" value="ATP-synt_V_A-type_beta_C"/>
    <property type="match status" value="1"/>
</dbReference>
<dbReference type="CDD" id="cd18118">
    <property type="entry name" value="ATP-synt_V_A-type_beta_N"/>
    <property type="match status" value="1"/>
</dbReference>
<dbReference type="CDD" id="cd01135">
    <property type="entry name" value="V_A-ATPase_B"/>
    <property type="match status" value="1"/>
</dbReference>
<dbReference type="FunFam" id="3.40.50.12240:FF:000001">
    <property type="entry name" value="V-type proton ATPase subunit B, brain"/>
    <property type="match status" value="1"/>
</dbReference>
<dbReference type="Gene3D" id="3.40.50.12240">
    <property type="match status" value="1"/>
</dbReference>
<dbReference type="HAMAP" id="MF_00310">
    <property type="entry name" value="ATP_synth_B_arch"/>
    <property type="match status" value="1"/>
</dbReference>
<dbReference type="InterPro" id="IPR055190">
    <property type="entry name" value="ATP-synt_VA_C"/>
</dbReference>
<dbReference type="InterPro" id="IPR020003">
    <property type="entry name" value="ATPase_a/bsu_AS"/>
</dbReference>
<dbReference type="InterPro" id="IPR004100">
    <property type="entry name" value="ATPase_F1/V1/A1_a/bsu_N"/>
</dbReference>
<dbReference type="InterPro" id="IPR000194">
    <property type="entry name" value="ATPase_F1/V1/A1_a/bsu_nucl-bd"/>
</dbReference>
<dbReference type="InterPro" id="IPR005723">
    <property type="entry name" value="ATPase_V1-cplx_bsu"/>
</dbReference>
<dbReference type="InterPro" id="IPR027417">
    <property type="entry name" value="P-loop_NTPase"/>
</dbReference>
<dbReference type="InterPro" id="IPR022879">
    <property type="entry name" value="V-ATPase_su_B/beta"/>
</dbReference>
<dbReference type="NCBIfam" id="NF003235">
    <property type="entry name" value="PRK04196.1"/>
    <property type="match status" value="1"/>
</dbReference>
<dbReference type="NCBIfam" id="TIGR01040">
    <property type="entry name" value="V-ATPase_V1_B"/>
    <property type="match status" value="1"/>
</dbReference>
<dbReference type="PANTHER" id="PTHR43389">
    <property type="entry name" value="V-TYPE PROTON ATPASE SUBUNIT B"/>
    <property type="match status" value="1"/>
</dbReference>
<dbReference type="PANTHER" id="PTHR43389:SF4">
    <property type="entry name" value="V-TYPE PROTON ATPASE SUBUNIT B"/>
    <property type="match status" value="1"/>
</dbReference>
<dbReference type="Pfam" id="PF00006">
    <property type="entry name" value="ATP-synt_ab"/>
    <property type="match status" value="1"/>
</dbReference>
<dbReference type="Pfam" id="PF02874">
    <property type="entry name" value="ATP-synt_ab_N"/>
    <property type="match status" value="1"/>
</dbReference>
<dbReference type="Pfam" id="PF22919">
    <property type="entry name" value="ATP-synt_VA_C"/>
    <property type="match status" value="1"/>
</dbReference>
<dbReference type="PIRSF" id="PIRSF039114">
    <property type="entry name" value="V-ATPsynth_beta/V-ATPase_B"/>
    <property type="match status" value="1"/>
</dbReference>
<dbReference type="SUPFAM" id="SSF52540">
    <property type="entry name" value="P-loop containing nucleoside triphosphate hydrolases"/>
    <property type="match status" value="1"/>
</dbReference>
<dbReference type="PROSITE" id="PS00152">
    <property type="entry name" value="ATPASE_ALPHA_BETA"/>
    <property type="match status" value="1"/>
</dbReference>
<gene>
    <name evidence="7" type="primary">vma2</name>
    <name evidence="7" type="ORF">SPAC637.05c</name>
</gene>
<feature type="chain" id="PRO_0000144647" description="V-type proton ATPase subunit B">
    <location>
        <begin position="1"/>
        <end position="503"/>
    </location>
</feature>
<feature type="binding site" evidence="2">
    <location>
        <position position="378"/>
    </location>
    <ligand>
        <name>ATP</name>
        <dbReference type="ChEBI" id="CHEBI:30616"/>
    </ligand>
</feature>
<feature type="modified residue" description="Phosphoserine" evidence="3">
    <location>
        <position position="491"/>
    </location>
</feature>
<feature type="modified residue" description="Phosphoserine" evidence="3">
    <location>
        <position position="492"/>
    </location>
</feature>
<feature type="modified residue" description="Phosphoserine" evidence="3">
    <location>
        <position position="502"/>
    </location>
</feature>
<feature type="modified residue" description="Phosphoserine" evidence="3">
    <location>
        <position position="503"/>
    </location>
</feature>
<organism>
    <name type="scientific">Schizosaccharomyces pombe (strain 972 / ATCC 24843)</name>
    <name type="common">Fission yeast</name>
    <dbReference type="NCBI Taxonomy" id="284812"/>
    <lineage>
        <taxon>Eukaryota</taxon>
        <taxon>Fungi</taxon>
        <taxon>Dikarya</taxon>
        <taxon>Ascomycota</taxon>
        <taxon>Taphrinomycotina</taxon>
        <taxon>Schizosaccharomycetes</taxon>
        <taxon>Schizosaccharomycetales</taxon>
        <taxon>Schizosaccharomycetaceae</taxon>
        <taxon>Schizosaccharomyces</taxon>
    </lineage>
</organism>
<keyword id="KW-0067">ATP-binding</keyword>
<keyword id="KW-0375">Hydrogen ion transport</keyword>
<keyword id="KW-0406">Ion transport</keyword>
<keyword id="KW-0472">Membrane</keyword>
<keyword id="KW-0547">Nucleotide-binding</keyword>
<keyword id="KW-0597">Phosphoprotein</keyword>
<keyword id="KW-1185">Reference proteome</keyword>
<keyword id="KW-0813">Transport</keyword>
<keyword id="KW-0926">Vacuole</keyword>
<accession>P31411</accession>
<protein>
    <recommendedName>
        <fullName evidence="5">V-type proton ATPase subunit B</fullName>
        <shortName>V-ATPase subunit B</shortName>
    </recommendedName>
    <alternativeName>
        <fullName>V-ATPase 57 kDa subunit</fullName>
    </alternativeName>
    <alternativeName>
        <fullName>Vacuolar proton pump subunit B</fullName>
    </alternativeName>
</protein>
<name>VATB_SCHPO</name>
<proteinExistence type="evidence at protein level"/>
<comment type="function">
    <text evidence="1">Non-catalytic subunit of the V1 complex of vacuolar(H+)-ATPase (V-ATPase), a multisubunit enzyme composed of a peripheral complex (V1) that hydrolyzes ATP and a membrane integral complex (V0) that translocates protons (By similarity). V-ATPase is responsible for acidifying and maintaining the pH of intracellular compartments (By similarity).</text>
</comment>
<comment type="subunit">
    <text evidence="1 4">V-ATPase is a heteromultimeric enzyme composed of a peripheral catalytic V1 complex (components A to H) attached to an integral membrane V0 proton pore complex (components: a, c, c', c'', d, e, f and VOA1) (By similarity). Interacts with rav1 (PubMed:18441123).</text>
</comment>
<comment type="subcellular location">
    <subcellularLocation>
        <location evidence="1">Vacuole membrane</location>
        <topology evidence="6">Peripheral membrane protein</topology>
        <orientation evidence="6">Cytoplasmic side</orientation>
    </subcellularLocation>
</comment>
<comment type="similarity">
    <text evidence="6">Belongs to the ATPase alpha/beta chains family.</text>
</comment>